<comment type="function">
    <text evidence="3">Involved in heme degradation and iron utilization under anaerobic conditions. Catalyzes a radical-mediated mechanism facilitating iron liberation and the production of the tetrapyrrole product anaerobilin. Can use heme, mesoheme and deuteroheme as substrates.</text>
</comment>
<comment type="catalytic activity">
    <reaction evidence="3">
        <text>2 reduced [flavodoxin] + heme b + 2 S-adenosyl-L-methionine = anaerobilin + 2 oxidized [flavodoxin] + Fe(2+) + 5'-deoxyadenosine + L-methionine + S-adenosyl-L-homocysteine</text>
        <dbReference type="Rhea" id="RHEA:15429"/>
        <dbReference type="Rhea" id="RHEA-COMP:10622"/>
        <dbReference type="Rhea" id="RHEA-COMP:10623"/>
        <dbReference type="ChEBI" id="CHEBI:17319"/>
        <dbReference type="ChEBI" id="CHEBI:29033"/>
        <dbReference type="ChEBI" id="CHEBI:57618"/>
        <dbReference type="ChEBI" id="CHEBI:57844"/>
        <dbReference type="ChEBI" id="CHEBI:57856"/>
        <dbReference type="ChEBI" id="CHEBI:58210"/>
        <dbReference type="ChEBI" id="CHEBI:59789"/>
        <dbReference type="ChEBI" id="CHEBI:60344"/>
        <dbReference type="ChEBI" id="CHEBI:136517"/>
        <dbReference type="EC" id="2.1.1.342"/>
    </reaction>
</comment>
<comment type="cofactor">
    <cofactor evidence="3">
        <name>[4Fe-4S] cluster</name>
        <dbReference type="ChEBI" id="CHEBI:49883"/>
    </cofactor>
    <text evidence="1">Binds 1 [4Fe-4S] cluster. The cluster is coordinated with 3 cysteines and an exchangeable S-adenosyl-L-methionine.</text>
</comment>
<comment type="activity regulation">
    <text evidence="3">Inhibited by exposure to molecular oxygen.</text>
</comment>
<comment type="similarity">
    <text evidence="5">Belongs to the anaerobic coproporphyrinogen-III oxidase family. ChuW/HutW subfamily.</text>
</comment>
<reference key="1">
    <citation type="journal article" date="2001" name="Nature">
        <title>Genome sequence of enterohaemorrhagic Escherichia coli O157:H7.</title>
        <authorList>
            <person name="Perna N.T."/>
            <person name="Plunkett G. III"/>
            <person name="Burland V."/>
            <person name="Mau B."/>
            <person name="Glasner J.D."/>
            <person name="Rose D.J."/>
            <person name="Mayhew G.F."/>
            <person name="Evans P.S."/>
            <person name="Gregor J."/>
            <person name="Kirkpatrick H.A."/>
            <person name="Posfai G."/>
            <person name="Hackett J."/>
            <person name="Klink S."/>
            <person name="Boutin A."/>
            <person name="Shao Y."/>
            <person name="Miller L."/>
            <person name="Grotbeck E.J."/>
            <person name="Davis N.W."/>
            <person name="Lim A."/>
            <person name="Dimalanta E.T."/>
            <person name="Potamousis K."/>
            <person name="Apodaca J."/>
            <person name="Anantharaman T.S."/>
            <person name="Lin J."/>
            <person name="Yen G."/>
            <person name="Schwartz D.C."/>
            <person name="Welch R.A."/>
            <person name="Blattner F.R."/>
        </authorList>
    </citation>
    <scope>NUCLEOTIDE SEQUENCE [LARGE SCALE GENOMIC DNA]</scope>
    <source>
        <strain>O157:H7 / EDL933 / ATCC 700927 / EHEC</strain>
    </source>
</reference>
<reference key="2">
    <citation type="journal article" date="2016" name="Proc. Natl. Acad. Sci. U.S.A.">
        <title>Radical new paradigm for heme degradation in Escherichia coli O157:H7.</title>
        <authorList>
            <person name="LaMattina J.W."/>
            <person name="Nix D.B."/>
            <person name="Lanzilotta W.N."/>
        </authorList>
    </citation>
    <scope>FUNCTION</scope>
    <scope>CATALYTIC ACTIVITY</scope>
    <scope>COFACTOR</scope>
    <scope>ACTIVITY REGULATION</scope>
</reference>
<keyword id="KW-0004">4Fe-4S</keyword>
<keyword id="KW-0408">Iron</keyword>
<keyword id="KW-0411">Iron-sulfur</keyword>
<keyword id="KW-0479">Metal-binding</keyword>
<keyword id="KW-0489">Methyltransferase</keyword>
<keyword id="KW-0949">S-adenosyl-L-methionine</keyword>
<keyword id="KW-0808">Transferase</keyword>
<dbReference type="EC" id="2.1.1.342" evidence="3"/>
<dbReference type="EMBL" id="AE005174">
    <property type="protein sequence ID" value="AAG58644.1"/>
    <property type="molecule type" value="Genomic_DNA"/>
</dbReference>
<dbReference type="PIR" id="G91176">
    <property type="entry name" value="G91176"/>
</dbReference>
<dbReference type="PIR" id="H86022">
    <property type="entry name" value="H86022"/>
</dbReference>
<dbReference type="SMR" id="A0A384LP51"/>
<dbReference type="STRING" id="386585.gene:10367461"/>
<dbReference type="KEGG" id="ece:Z4914"/>
<dbReference type="OMA" id="TLAGRFW"/>
<dbReference type="BRENDA" id="2.1.1.342">
    <property type="organism ID" value="2026"/>
</dbReference>
<dbReference type="Proteomes" id="UP000002519">
    <property type="component" value="Chromosome"/>
</dbReference>
<dbReference type="GO" id="GO:0005737">
    <property type="term" value="C:cytoplasm"/>
    <property type="evidence" value="ECO:0007669"/>
    <property type="project" value="TreeGrafter"/>
</dbReference>
<dbReference type="GO" id="GO:0051539">
    <property type="term" value="F:4 iron, 4 sulfur cluster binding"/>
    <property type="evidence" value="ECO:0007669"/>
    <property type="project" value="UniProtKB-KW"/>
</dbReference>
<dbReference type="GO" id="GO:0046872">
    <property type="term" value="F:metal ion binding"/>
    <property type="evidence" value="ECO:0007669"/>
    <property type="project" value="UniProtKB-KW"/>
</dbReference>
<dbReference type="GO" id="GO:0008168">
    <property type="term" value="F:methyltransferase activity"/>
    <property type="evidence" value="ECO:0007669"/>
    <property type="project" value="UniProtKB-KW"/>
</dbReference>
<dbReference type="GO" id="GO:0032259">
    <property type="term" value="P:methylation"/>
    <property type="evidence" value="ECO:0007669"/>
    <property type="project" value="UniProtKB-KW"/>
</dbReference>
<dbReference type="GO" id="GO:0006779">
    <property type="term" value="P:porphyrin-containing compound biosynthetic process"/>
    <property type="evidence" value="ECO:0007669"/>
    <property type="project" value="TreeGrafter"/>
</dbReference>
<dbReference type="CDD" id="cd01335">
    <property type="entry name" value="Radical_SAM"/>
    <property type="match status" value="1"/>
</dbReference>
<dbReference type="Gene3D" id="3.20.20.70">
    <property type="entry name" value="Aldolase class I"/>
    <property type="match status" value="1"/>
</dbReference>
<dbReference type="InterPro" id="IPR013785">
    <property type="entry name" value="Aldolase_TIM"/>
</dbReference>
<dbReference type="InterPro" id="IPR034505">
    <property type="entry name" value="Coproporphyrinogen-III_oxidase"/>
</dbReference>
<dbReference type="InterPro" id="IPR006638">
    <property type="entry name" value="Elp3/MiaA/NifB-like_rSAM"/>
</dbReference>
<dbReference type="InterPro" id="IPR026332">
    <property type="entry name" value="HutW"/>
</dbReference>
<dbReference type="InterPro" id="IPR007197">
    <property type="entry name" value="rSAM"/>
</dbReference>
<dbReference type="NCBIfam" id="TIGR04107">
    <property type="entry name" value="rSAM_HutW"/>
    <property type="match status" value="1"/>
</dbReference>
<dbReference type="PANTHER" id="PTHR13932">
    <property type="entry name" value="COPROPORPHYRINIGEN III OXIDASE"/>
    <property type="match status" value="1"/>
</dbReference>
<dbReference type="PANTHER" id="PTHR13932:SF9">
    <property type="entry name" value="COPROPORPHYRINOGEN III OXIDASE"/>
    <property type="match status" value="1"/>
</dbReference>
<dbReference type="Pfam" id="PF04055">
    <property type="entry name" value="Radical_SAM"/>
    <property type="match status" value="1"/>
</dbReference>
<dbReference type="SFLD" id="SFLDF00311">
    <property type="entry name" value="heme_degradation_proteins_(Hut"/>
    <property type="match status" value="1"/>
</dbReference>
<dbReference type="SFLD" id="SFLDS00029">
    <property type="entry name" value="Radical_SAM"/>
    <property type="match status" value="1"/>
</dbReference>
<dbReference type="SMART" id="SM00729">
    <property type="entry name" value="Elp3"/>
    <property type="match status" value="1"/>
</dbReference>
<dbReference type="SUPFAM" id="SSF102114">
    <property type="entry name" value="Radical SAM enzymes"/>
    <property type="match status" value="1"/>
</dbReference>
<dbReference type="PROSITE" id="PS51918">
    <property type="entry name" value="RADICAL_SAM"/>
    <property type="match status" value="1"/>
</dbReference>
<organism>
    <name type="scientific">Escherichia coli O157:H7</name>
    <dbReference type="NCBI Taxonomy" id="83334"/>
    <lineage>
        <taxon>Bacteria</taxon>
        <taxon>Pseudomonadati</taxon>
        <taxon>Pseudomonadota</taxon>
        <taxon>Gammaproteobacteria</taxon>
        <taxon>Enterobacterales</taxon>
        <taxon>Enterobacteriaceae</taxon>
        <taxon>Escherichia</taxon>
    </lineage>
</organism>
<evidence type="ECO:0000250" key="1">
    <source>
        <dbReference type="UniProtKB" id="P32131"/>
    </source>
</evidence>
<evidence type="ECO:0000255" key="2">
    <source>
        <dbReference type="PROSITE-ProRule" id="PRU01266"/>
    </source>
</evidence>
<evidence type="ECO:0000269" key="3">
    <source>
    </source>
</evidence>
<evidence type="ECO:0000303" key="4">
    <source>
    </source>
</evidence>
<evidence type="ECO:0000305" key="5"/>
<evidence type="ECO:0000312" key="6">
    <source>
        <dbReference type="EMBL" id="AAG58644.1"/>
    </source>
</evidence>
<name>CHUW_ECO57</name>
<feature type="chain" id="PRO_0000446303" description="Anaerobilin synthase">
    <location>
        <begin position="1"/>
        <end position="445"/>
    </location>
</feature>
<feature type="domain" description="Radical SAM core" evidence="2">
    <location>
        <begin position="52"/>
        <end position="287"/>
    </location>
</feature>
<feature type="binding site" evidence="1">
    <location>
        <position position="61"/>
    </location>
    <ligand>
        <name>S-adenosyl-L-methionine</name>
        <dbReference type="ChEBI" id="CHEBI:59789"/>
        <label>1</label>
    </ligand>
</feature>
<feature type="binding site" evidence="1">
    <location>
        <position position="67"/>
    </location>
    <ligand>
        <name>[4Fe-4S] cluster</name>
        <dbReference type="ChEBI" id="CHEBI:49883"/>
        <note>4Fe-4S-S-AdoMet</note>
    </ligand>
</feature>
<feature type="binding site" evidence="1">
    <location>
        <position position="71"/>
    </location>
    <ligand>
        <name>[4Fe-4S] cluster</name>
        <dbReference type="ChEBI" id="CHEBI:49883"/>
        <note>4Fe-4S-S-AdoMet</note>
    </ligand>
</feature>
<feature type="binding site" evidence="1">
    <location>
        <position position="73"/>
    </location>
    <ligand>
        <name>S-adenosyl-L-methionine</name>
        <dbReference type="ChEBI" id="CHEBI:59789"/>
        <label>2</label>
    </ligand>
</feature>
<feature type="binding site" evidence="1">
    <location>
        <position position="74"/>
    </location>
    <ligand>
        <name>[4Fe-4S] cluster</name>
        <dbReference type="ChEBI" id="CHEBI:49883"/>
        <note>4Fe-4S-S-AdoMet</note>
    </ligand>
</feature>
<feature type="binding site" evidence="1">
    <location>
        <position position="118"/>
    </location>
    <ligand>
        <name>S-adenosyl-L-methionine</name>
        <dbReference type="ChEBI" id="CHEBI:59789"/>
        <label>1</label>
    </ligand>
</feature>
<feature type="binding site" evidence="1">
    <location>
        <begin position="119"/>
        <end position="120"/>
    </location>
    <ligand>
        <name>S-adenosyl-L-methionine</name>
        <dbReference type="ChEBI" id="CHEBI:59789"/>
        <label>2</label>
    </ligand>
</feature>
<feature type="binding site" evidence="1">
    <location>
        <position position="151"/>
    </location>
    <ligand>
        <name>S-adenosyl-L-methionine</name>
        <dbReference type="ChEBI" id="CHEBI:59789"/>
        <label>1</label>
    </ligand>
</feature>
<feature type="binding site" evidence="1">
    <location>
        <position position="178"/>
    </location>
    <ligand>
        <name>S-adenosyl-L-methionine</name>
        <dbReference type="ChEBI" id="CHEBI:59789"/>
        <label>2</label>
    </ligand>
</feature>
<feature type="binding site" evidence="1">
    <location>
        <position position="190"/>
    </location>
    <ligand>
        <name>S-adenosyl-L-methionine</name>
        <dbReference type="ChEBI" id="CHEBI:59789"/>
        <label>2</label>
    </ligand>
</feature>
<feature type="binding site" evidence="1">
    <location>
        <position position="215"/>
    </location>
    <ligand>
        <name>S-adenosyl-L-methionine</name>
        <dbReference type="ChEBI" id="CHEBI:59789"/>
        <label>2</label>
    </ligand>
</feature>
<gene>
    <name evidence="4" type="primary">chuW</name>
    <name evidence="6" type="ordered locus">Z4914</name>
</gene>
<sequence>MNANNTLDLTPHFALDGDQPFKDRRAMMPFRGAIPVAKEQLAQTWQEMINQTASPRKRLVYLHIPFCATHCTFCGFYQNRFNEDACAHYTDALIREIEMEADSVLHQSAPIHAVYFGGGTPSALSAHDLARIITTLREKLPLAPDCEITIEGRVLNFDAERIDACLDAGANRFSIGIQSFNSKIRKKMARTSDGPTAIAFMESLVKRDRAAVVCDLLFGLPGQDAQTWGEDLAIARDIGLDGVDLYALNVLSNTPLGKAVENGRTTVPSPAERRDLYLQGCDFMDDAGWRCISNSHWGRTTRERNLYNLLIKQGADCLAFGSGAGGSINGYSWMNERNLQTWHESVAAGKKPLMLIMRNAERNAQWRHTLQSGVETARVPLDELTPHAEKLAPLLAQWHQKGLSRDASTCLRLTNEGRFWASNILQSLNELIQVLNAPAIMREKP</sequence>
<proteinExistence type="evidence at protein level"/>
<accession>A0A384LP51</accession>
<protein>
    <recommendedName>
        <fullName evidence="5">Anaerobilin synthase</fullName>
        <ecNumber evidence="3">2.1.1.342</ecNumber>
    </recommendedName>
</protein>